<gene>
    <name evidence="1" type="primary">xseA</name>
    <name type="ordered locus">VV0774</name>
</gene>
<evidence type="ECO:0000255" key="1">
    <source>
        <dbReference type="HAMAP-Rule" id="MF_00378"/>
    </source>
</evidence>
<evidence type="ECO:0000305" key="2"/>
<protein>
    <recommendedName>
        <fullName evidence="1">Exodeoxyribonuclease 7 large subunit</fullName>
        <ecNumber evidence="1">3.1.11.6</ecNumber>
    </recommendedName>
    <alternativeName>
        <fullName evidence="1">Exodeoxyribonuclease VII large subunit</fullName>
        <shortName evidence="1">Exonuclease VII large subunit</shortName>
    </alternativeName>
</protein>
<comment type="function">
    <text evidence="1">Bidirectionally degrades single-stranded DNA into large acid-insoluble oligonucleotides, which are then degraded further into small acid-soluble oligonucleotides.</text>
</comment>
<comment type="catalytic activity">
    <reaction evidence="1">
        <text>Exonucleolytic cleavage in either 5'- to 3'- or 3'- to 5'-direction to yield nucleoside 5'-phosphates.</text>
        <dbReference type="EC" id="3.1.11.6"/>
    </reaction>
</comment>
<comment type="subunit">
    <text evidence="1">Heterooligomer composed of large and small subunits.</text>
</comment>
<comment type="subcellular location">
    <subcellularLocation>
        <location evidence="1">Cytoplasm</location>
    </subcellularLocation>
</comment>
<comment type="similarity">
    <text evidence="1">Belongs to the XseA family.</text>
</comment>
<comment type="sequence caution" evidence="2">
    <conflict type="erroneous initiation">
        <sequence resource="EMBL-CDS" id="BAC93538"/>
    </conflict>
</comment>
<proteinExistence type="inferred from homology"/>
<keyword id="KW-0963">Cytoplasm</keyword>
<keyword id="KW-0269">Exonuclease</keyword>
<keyword id="KW-0378">Hydrolase</keyword>
<keyword id="KW-0540">Nuclease</keyword>
<feature type="chain" id="PRO_0000197902" description="Exodeoxyribonuclease 7 large subunit">
    <location>
        <begin position="1"/>
        <end position="443"/>
    </location>
</feature>
<sequence>MSSLTNPNIFTVSRLNSEVRLLLENQLGIVWLVGEISNFSAPVSGHWYFTLKDSMAQVKCAMFRGNNRLVSFKPTNGNQVLVKARLSLYEPRGDYQLIIESMQPEGDGRLQQQFDALKMKLASEGLFAQSSKQAIPEHPKCVGIITSKTGAALYDILDVLKRRDPSLPVVIYPTLVQGEEAAIQIAQAIGRANSRNECDVLIVGRGGGSLEDLWCFNNEIVARTIAASQIPIISAVGHEIDVTIADFVADLRAPTPSAAAELVSRDNSHKDQALISREQKLRAAWRHYLTEQNRTIVSLSHRLEKQHPRYRLMRQTQQADELQIRLQRAMEKYLAQREQKVSRVQHKLQLLSPVRQISEQKNALARVEQKMMDAMDRKLLRLRHQIAIAAEKLDTVSPLATLKRGYSITQSESGEVITRQSQIKTGDTLVTRLSDGEIRSTVN</sequence>
<reference key="1">
    <citation type="journal article" date="2003" name="Genome Res.">
        <title>Comparative genome analysis of Vibrio vulnificus, a marine pathogen.</title>
        <authorList>
            <person name="Chen C.-Y."/>
            <person name="Wu K.-M."/>
            <person name="Chang Y.-C."/>
            <person name="Chang C.-H."/>
            <person name="Tsai H.-C."/>
            <person name="Liao T.-L."/>
            <person name="Liu Y.-M."/>
            <person name="Chen H.-J."/>
            <person name="Shen A.B.-T."/>
            <person name="Li J.-C."/>
            <person name="Su T.-L."/>
            <person name="Shao C.-P."/>
            <person name="Lee C.-T."/>
            <person name="Hor L.-I."/>
            <person name="Tsai S.-F."/>
        </authorList>
    </citation>
    <scope>NUCLEOTIDE SEQUENCE [LARGE SCALE GENOMIC DNA]</scope>
    <source>
        <strain>YJ016</strain>
    </source>
</reference>
<name>EX7L_VIBVY</name>
<dbReference type="EC" id="3.1.11.6" evidence="1"/>
<dbReference type="EMBL" id="BA000037">
    <property type="protein sequence ID" value="BAC93538.1"/>
    <property type="status" value="ALT_INIT"/>
    <property type="molecule type" value="Genomic_DNA"/>
</dbReference>
<dbReference type="RefSeq" id="WP_043877075.1">
    <property type="nucleotide sequence ID" value="NC_005139.1"/>
</dbReference>
<dbReference type="SMR" id="Q7MNE3"/>
<dbReference type="STRING" id="672.VV93_v1c07200"/>
<dbReference type="KEGG" id="vvy:VV0774"/>
<dbReference type="eggNOG" id="COG1570">
    <property type="taxonomic scope" value="Bacteria"/>
</dbReference>
<dbReference type="HOGENOM" id="CLU_023625_3_1_6"/>
<dbReference type="Proteomes" id="UP000002675">
    <property type="component" value="Chromosome I"/>
</dbReference>
<dbReference type="GO" id="GO:0005737">
    <property type="term" value="C:cytoplasm"/>
    <property type="evidence" value="ECO:0007669"/>
    <property type="project" value="UniProtKB-SubCell"/>
</dbReference>
<dbReference type="GO" id="GO:0009318">
    <property type="term" value="C:exodeoxyribonuclease VII complex"/>
    <property type="evidence" value="ECO:0007669"/>
    <property type="project" value="InterPro"/>
</dbReference>
<dbReference type="GO" id="GO:0008855">
    <property type="term" value="F:exodeoxyribonuclease VII activity"/>
    <property type="evidence" value="ECO:0007669"/>
    <property type="project" value="UniProtKB-UniRule"/>
</dbReference>
<dbReference type="GO" id="GO:0003676">
    <property type="term" value="F:nucleic acid binding"/>
    <property type="evidence" value="ECO:0007669"/>
    <property type="project" value="InterPro"/>
</dbReference>
<dbReference type="GO" id="GO:0006308">
    <property type="term" value="P:DNA catabolic process"/>
    <property type="evidence" value="ECO:0007669"/>
    <property type="project" value="UniProtKB-UniRule"/>
</dbReference>
<dbReference type="CDD" id="cd04489">
    <property type="entry name" value="ExoVII_LU_OBF"/>
    <property type="match status" value="1"/>
</dbReference>
<dbReference type="HAMAP" id="MF_00378">
    <property type="entry name" value="Exonuc_7_L"/>
    <property type="match status" value="1"/>
</dbReference>
<dbReference type="InterPro" id="IPR003753">
    <property type="entry name" value="Exonuc_VII_L"/>
</dbReference>
<dbReference type="InterPro" id="IPR020579">
    <property type="entry name" value="Exonuc_VII_lsu_C"/>
</dbReference>
<dbReference type="InterPro" id="IPR025824">
    <property type="entry name" value="OB-fold_nuc-bd_dom"/>
</dbReference>
<dbReference type="NCBIfam" id="TIGR00237">
    <property type="entry name" value="xseA"/>
    <property type="match status" value="1"/>
</dbReference>
<dbReference type="PANTHER" id="PTHR30008">
    <property type="entry name" value="EXODEOXYRIBONUCLEASE 7 LARGE SUBUNIT"/>
    <property type="match status" value="1"/>
</dbReference>
<dbReference type="PANTHER" id="PTHR30008:SF0">
    <property type="entry name" value="EXODEOXYRIBONUCLEASE 7 LARGE SUBUNIT"/>
    <property type="match status" value="1"/>
</dbReference>
<dbReference type="Pfam" id="PF02601">
    <property type="entry name" value="Exonuc_VII_L"/>
    <property type="match status" value="1"/>
</dbReference>
<dbReference type="Pfam" id="PF13742">
    <property type="entry name" value="tRNA_anti_2"/>
    <property type="match status" value="1"/>
</dbReference>
<accession>Q7MNE3</accession>
<organism>
    <name type="scientific">Vibrio vulnificus (strain YJ016)</name>
    <dbReference type="NCBI Taxonomy" id="196600"/>
    <lineage>
        <taxon>Bacteria</taxon>
        <taxon>Pseudomonadati</taxon>
        <taxon>Pseudomonadota</taxon>
        <taxon>Gammaproteobacteria</taxon>
        <taxon>Vibrionales</taxon>
        <taxon>Vibrionaceae</taxon>
        <taxon>Vibrio</taxon>
    </lineage>
</organism>